<evidence type="ECO:0000255" key="1">
    <source>
        <dbReference type="HAMAP-Rule" id="MF_00522"/>
    </source>
</evidence>
<geneLocation type="chloroplast"/>
<sequence length="41" mass="4568">MSGFKGYLSTVPVVFAIWLTFTAGLIIEINRLFPDGLVFSF</sequence>
<accession>Q06J31</accession>
<name>PSAJ_BIGNA</name>
<keyword id="KW-0150">Chloroplast</keyword>
<keyword id="KW-0472">Membrane</keyword>
<keyword id="KW-0602">Photosynthesis</keyword>
<keyword id="KW-0603">Photosystem I</keyword>
<keyword id="KW-0934">Plastid</keyword>
<keyword id="KW-0793">Thylakoid</keyword>
<keyword id="KW-0812">Transmembrane</keyword>
<keyword id="KW-1133">Transmembrane helix</keyword>
<feature type="chain" id="PRO_0000295907" description="Photosystem I reaction center subunit IX">
    <location>
        <begin position="1"/>
        <end position="41"/>
    </location>
</feature>
<feature type="transmembrane region" description="Helical" evidence="1">
    <location>
        <begin position="7"/>
        <end position="27"/>
    </location>
</feature>
<dbReference type="EMBL" id="DQ851108">
    <property type="protein sequence ID" value="ABG91428.1"/>
    <property type="molecule type" value="Genomic_DNA"/>
</dbReference>
<dbReference type="RefSeq" id="YP_778596.1">
    <property type="nucleotide sequence ID" value="NC_008408.1"/>
</dbReference>
<dbReference type="SMR" id="Q06J31"/>
<dbReference type="GeneID" id="4353013"/>
<dbReference type="GO" id="GO:0009535">
    <property type="term" value="C:chloroplast thylakoid membrane"/>
    <property type="evidence" value="ECO:0007669"/>
    <property type="project" value="UniProtKB-SubCell"/>
</dbReference>
<dbReference type="GO" id="GO:0009522">
    <property type="term" value="C:photosystem I"/>
    <property type="evidence" value="ECO:0007669"/>
    <property type="project" value="UniProtKB-KW"/>
</dbReference>
<dbReference type="GO" id="GO:0015979">
    <property type="term" value="P:photosynthesis"/>
    <property type="evidence" value="ECO:0007669"/>
    <property type="project" value="UniProtKB-UniRule"/>
</dbReference>
<dbReference type="Gene3D" id="1.20.5.510">
    <property type="entry name" value="Single helix bin"/>
    <property type="match status" value="1"/>
</dbReference>
<dbReference type="HAMAP" id="MF_00522">
    <property type="entry name" value="PSI_PsaJ"/>
    <property type="match status" value="1"/>
</dbReference>
<dbReference type="InterPro" id="IPR002615">
    <property type="entry name" value="PSI_PsaJ"/>
</dbReference>
<dbReference type="InterPro" id="IPR036062">
    <property type="entry name" value="PSI_PsaJ_sf"/>
</dbReference>
<dbReference type="PANTHER" id="PTHR36082">
    <property type="match status" value="1"/>
</dbReference>
<dbReference type="PANTHER" id="PTHR36082:SF2">
    <property type="entry name" value="PHOTOSYSTEM I REACTION CENTER SUBUNIT IX"/>
    <property type="match status" value="1"/>
</dbReference>
<dbReference type="Pfam" id="PF01701">
    <property type="entry name" value="PSI_PsaJ"/>
    <property type="match status" value="1"/>
</dbReference>
<dbReference type="SUPFAM" id="SSF81544">
    <property type="entry name" value="Subunit IX of photosystem I reaction centre, PsaJ"/>
    <property type="match status" value="1"/>
</dbReference>
<gene>
    <name evidence="1" type="primary">psaJ</name>
</gene>
<reference key="1">
    <citation type="journal article" date="2007" name="Mol. Biol. Evol.">
        <title>The complete chloroplast genome of the chlorarachniophyte Bigelowiella natans: evidence for independent origins of chlorarachniophyte and euglenid secondary endosymbionts.</title>
        <authorList>
            <person name="Rogers M.B."/>
            <person name="Gilson P.R."/>
            <person name="Su V."/>
            <person name="McFadden G.I."/>
            <person name="Keeling P.J."/>
        </authorList>
    </citation>
    <scope>NUCLEOTIDE SEQUENCE [LARGE SCALE GENOMIC DNA]</scope>
</reference>
<protein>
    <recommendedName>
        <fullName evidence="1">Photosystem I reaction center subunit IX</fullName>
    </recommendedName>
</protein>
<comment type="function">
    <text evidence="1">May help in the organization of the PsaE and PsaF subunits.</text>
</comment>
<comment type="subcellular location">
    <subcellularLocation>
        <location evidence="1">Plastid</location>
        <location evidence="1">Chloroplast thylakoid membrane</location>
        <topology evidence="1">Single-pass membrane protein</topology>
    </subcellularLocation>
</comment>
<comment type="similarity">
    <text evidence="1">Belongs to the PsaJ family.</text>
</comment>
<organism>
    <name type="scientific">Bigelowiella natans</name>
    <name type="common">Pedinomonas minutissima</name>
    <name type="synonym">Chlorarachnion sp. (strain CCMP621)</name>
    <dbReference type="NCBI Taxonomy" id="227086"/>
    <lineage>
        <taxon>Eukaryota</taxon>
        <taxon>Sar</taxon>
        <taxon>Rhizaria</taxon>
        <taxon>Cercozoa</taxon>
        <taxon>Chlorarachniophyceae</taxon>
        <taxon>Bigelowiella</taxon>
    </lineage>
</organism>
<proteinExistence type="inferred from homology"/>